<keyword id="KW-0024">Alternative initiation</keyword>
<keyword id="KW-0167">Capsid protein</keyword>
<keyword id="KW-0175">Coiled coil</keyword>
<keyword id="KW-1032">Host cell membrane</keyword>
<keyword id="KW-1035">Host cytoplasm</keyword>
<keyword id="KW-1039">Host endosome</keyword>
<keyword id="KW-1043">Host membrane</keyword>
<keyword id="KW-0945">Host-virus interaction</keyword>
<keyword id="KW-0449">Lipoprotein</keyword>
<keyword id="KW-0472">Membrane</keyword>
<keyword id="KW-0479">Metal-binding</keyword>
<keyword id="KW-0519">Myristate</keyword>
<keyword id="KW-0597">Phosphoprotein</keyword>
<keyword id="KW-0694">RNA-binding</keyword>
<keyword id="KW-0832">Ubl conjugation</keyword>
<keyword id="KW-1198">Viral budding</keyword>
<keyword id="KW-1187">Viral budding via the host ESCRT complexes</keyword>
<keyword id="KW-0468">Viral matrix protein</keyword>
<keyword id="KW-0543">Viral nucleoprotein</keyword>
<keyword id="KW-1188">Viral release from host cell</keyword>
<keyword id="KW-0946">Virion</keyword>
<keyword id="KW-0862">Zinc</keyword>
<keyword id="KW-0863">Zinc-finger</keyword>
<organismHost>
    <name type="scientific">Mus musculus</name>
    <name type="common">Mouse</name>
    <dbReference type="NCBI Taxonomy" id="10090"/>
</organismHost>
<organism>
    <name type="scientific">Friend murine leukemia virus (isolate PVC-211)</name>
    <name type="common">FrMLV</name>
    <dbReference type="NCBI Taxonomy" id="11798"/>
    <lineage>
        <taxon>Viruses</taxon>
        <taxon>Riboviria</taxon>
        <taxon>Pararnavirae</taxon>
        <taxon>Artverviricota</taxon>
        <taxon>Revtraviricetes</taxon>
        <taxon>Ortervirales</taxon>
        <taxon>Retroviridae</taxon>
        <taxon>Orthoretrovirinae</taxon>
        <taxon>Gammaretrovirus</taxon>
        <taxon>Murine leukemia virus</taxon>
    </lineage>
</organism>
<feature type="initiator methionine" description="Removed; by host" evidence="4">
    <location>
        <position position="1"/>
    </location>
</feature>
<feature type="chain" id="PRO_0000390813" description="Gag polyprotein">
    <location>
        <begin position="2"/>
        <end position="538"/>
    </location>
</feature>
<feature type="chain" id="PRO_0000040904" description="Matrix protein p15">
    <location>
        <begin position="2"/>
        <end position="131"/>
    </location>
</feature>
<feature type="chain" id="PRO_0000040905" description="RNA-binding phosphoprotein p12">
    <location>
        <begin position="132"/>
        <end position="215"/>
    </location>
</feature>
<feature type="chain" id="PRO_0000040906" description="Capsid protein p30">
    <location>
        <begin position="216"/>
        <end position="478"/>
    </location>
</feature>
<feature type="chain" id="PRO_0000040907" description="Nucleocapsid protein p10-Gag">
    <location>
        <begin position="479"/>
        <end position="538"/>
    </location>
</feature>
<feature type="zinc finger region" description="CCHC-type" evidence="5">
    <location>
        <begin position="502"/>
        <end position="519"/>
    </location>
</feature>
<feature type="region of interest" description="Disordered" evidence="6">
    <location>
        <begin position="111"/>
        <end position="218"/>
    </location>
</feature>
<feature type="region of interest" description="Interaction with host PIAS4" evidence="1">
    <location>
        <begin position="345"/>
        <end position="393"/>
    </location>
</feature>
<feature type="region of interest" description="Interaction with host UBE2I" evidence="1">
    <location>
        <begin position="430"/>
        <end position="435"/>
    </location>
</feature>
<feature type="region of interest" description="Disordered" evidence="6">
    <location>
        <begin position="434"/>
        <end position="538"/>
    </location>
</feature>
<feature type="coiled-coil region" evidence="4">
    <location>
        <begin position="438"/>
        <end position="478"/>
    </location>
</feature>
<feature type="short sequence motif" description="PTAP/PSAP motif" evidence="1">
    <location>
        <begin position="111"/>
        <end position="114"/>
    </location>
</feature>
<feature type="short sequence motif" description="LYPX(n)L motif" evidence="1">
    <location>
        <begin position="130"/>
        <end position="134"/>
    </location>
</feature>
<feature type="short sequence motif" description="PPXY motif" evidence="1">
    <location>
        <begin position="162"/>
        <end position="165"/>
    </location>
</feature>
<feature type="compositionally biased region" description="Pro residues" evidence="6">
    <location>
        <begin position="111"/>
        <end position="124"/>
    </location>
</feature>
<feature type="compositionally biased region" description="Pro residues" evidence="6">
    <location>
        <begin position="161"/>
        <end position="173"/>
    </location>
</feature>
<feature type="compositionally biased region" description="Basic and acidic residues" evidence="6">
    <location>
        <begin position="434"/>
        <end position="466"/>
    </location>
</feature>
<feature type="compositionally biased region" description="Basic and acidic residues" evidence="6">
    <location>
        <begin position="486"/>
        <end position="519"/>
    </location>
</feature>
<feature type="site" description="Cleavage; by viral protease" evidence="1">
    <location>
        <begin position="131"/>
        <end position="132"/>
    </location>
</feature>
<feature type="site" description="Cleavage; by viral protease" evidence="1">
    <location>
        <begin position="215"/>
        <end position="216"/>
    </location>
</feature>
<feature type="site" description="Cleavage; by viral protease" evidence="1">
    <location>
        <begin position="478"/>
        <end position="479"/>
    </location>
</feature>
<feature type="modified residue" description="Phosphoserine; by host" evidence="1">
    <location>
        <position position="192"/>
    </location>
</feature>
<feature type="lipid moiety-binding region" description="N-myristoyl glycine; by host" evidence="4">
    <location>
        <position position="2"/>
    </location>
</feature>
<accession>P26805</accession>
<reference key="1">
    <citation type="journal article" date="1992" name="Nucleic Acids Res.">
        <title>Complete nucleotide sequence of a neuropathogenic variant of Friend murine leukemia virus PVC-211.</title>
        <authorList>
            <person name="Remington M.P."/>
            <person name="Hoffman P.M."/>
            <person name="Ruscetti S.K."/>
            <person name="Masuda M."/>
        </authorList>
    </citation>
    <scope>NUCLEOTIDE SEQUENCE [GENOMIC RNA]</scope>
</reference>
<proteinExistence type="inferred from homology"/>
<dbReference type="EMBL" id="M93134">
    <property type="protein sequence ID" value="AAA46476.1"/>
    <property type="molecule type" value="Genomic_RNA"/>
</dbReference>
<dbReference type="PIR" id="S35474">
    <property type="entry name" value="S35474"/>
</dbReference>
<dbReference type="SMR" id="P26805"/>
<dbReference type="Proteomes" id="UP000007777">
    <property type="component" value="Genome"/>
</dbReference>
<dbReference type="GO" id="GO:0020002">
    <property type="term" value="C:host cell plasma membrane"/>
    <property type="evidence" value="ECO:0007669"/>
    <property type="project" value="UniProtKB-SubCell"/>
</dbReference>
<dbReference type="GO" id="GO:0072494">
    <property type="term" value="C:host multivesicular body"/>
    <property type="evidence" value="ECO:0007669"/>
    <property type="project" value="UniProtKB-SubCell"/>
</dbReference>
<dbReference type="GO" id="GO:0016020">
    <property type="term" value="C:membrane"/>
    <property type="evidence" value="ECO:0007669"/>
    <property type="project" value="UniProtKB-KW"/>
</dbReference>
<dbReference type="GO" id="GO:0019013">
    <property type="term" value="C:viral nucleocapsid"/>
    <property type="evidence" value="ECO:0007669"/>
    <property type="project" value="UniProtKB-KW"/>
</dbReference>
<dbReference type="GO" id="GO:0003723">
    <property type="term" value="F:RNA binding"/>
    <property type="evidence" value="ECO:0007669"/>
    <property type="project" value="UniProtKB-KW"/>
</dbReference>
<dbReference type="GO" id="GO:0039660">
    <property type="term" value="F:structural constituent of virion"/>
    <property type="evidence" value="ECO:0007669"/>
    <property type="project" value="UniProtKB-KW"/>
</dbReference>
<dbReference type="GO" id="GO:0008270">
    <property type="term" value="F:zinc ion binding"/>
    <property type="evidence" value="ECO:0007669"/>
    <property type="project" value="UniProtKB-KW"/>
</dbReference>
<dbReference type="GO" id="GO:0039702">
    <property type="term" value="P:viral budding via host ESCRT complex"/>
    <property type="evidence" value="ECO:0007669"/>
    <property type="project" value="UniProtKB-KW"/>
</dbReference>
<dbReference type="Gene3D" id="1.10.150.180">
    <property type="entry name" value="Gamma-retroviral matrix domain"/>
    <property type="match status" value="1"/>
</dbReference>
<dbReference type="Gene3D" id="1.10.375.10">
    <property type="entry name" value="Human Immunodeficiency Virus Type 1 Capsid Protein"/>
    <property type="match status" value="1"/>
</dbReference>
<dbReference type="Gene3D" id="4.10.60.10">
    <property type="entry name" value="Zinc finger, CCHC-type"/>
    <property type="match status" value="1"/>
</dbReference>
<dbReference type="InterPro" id="IPR000840">
    <property type="entry name" value="G_retro_matrix"/>
</dbReference>
<dbReference type="InterPro" id="IPR036946">
    <property type="entry name" value="G_retro_matrix_sf"/>
</dbReference>
<dbReference type="InterPro" id="IPR002079">
    <property type="entry name" value="Gag_p12"/>
</dbReference>
<dbReference type="InterPro" id="IPR003036">
    <property type="entry name" value="Gag_P30"/>
</dbReference>
<dbReference type="InterPro" id="IPR008919">
    <property type="entry name" value="Retrov_capsid_N"/>
</dbReference>
<dbReference type="InterPro" id="IPR050462">
    <property type="entry name" value="Retroviral_Gag-Pol_poly"/>
</dbReference>
<dbReference type="InterPro" id="IPR010999">
    <property type="entry name" value="Retrovr_matrix"/>
</dbReference>
<dbReference type="InterPro" id="IPR001878">
    <property type="entry name" value="Znf_CCHC"/>
</dbReference>
<dbReference type="InterPro" id="IPR036875">
    <property type="entry name" value="Znf_CCHC_sf"/>
</dbReference>
<dbReference type="PANTHER" id="PTHR33166">
    <property type="entry name" value="GAG_P30 DOMAIN-CONTAINING PROTEIN"/>
    <property type="match status" value="1"/>
</dbReference>
<dbReference type="Pfam" id="PF01140">
    <property type="entry name" value="Gag_MA"/>
    <property type="match status" value="1"/>
</dbReference>
<dbReference type="Pfam" id="PF01141">
    <property type="entry name" value="Gag_p12"/>
    <property type="match status" value="1"/>
</dbReference>
<dbReference type="Pfam" id="PF02093">
    <property type="entry name" value="Gag_p30"/>
    <property type="match status" value="1"/>
</dbReference>
<dbReference type="Pfam" id="PF00098">
    <property type="entry name" value="zf-CCHC"/>
    <property type="match status" value="1"/>
</dbReference>
<dbReference type="SMART" id="SM00343">
    <property type="entry name" value="ZnF_C2HC"/>
    <property type="match status" value="1"/>
</dbReference>
<dbReference type="SUPFAM" id="SSF47836">
    <property type="entry name" value="Retroviral matrix proteins"/>
    <property type="match status" value="1"/>
</dbReference>
<dbReference type="SUPFAM" id="SSF47943">
    <property type="entry name" value="Retrovirus capsid protein, N-terminal core domain"/>
    <property type="match status" value="1"/>
</dbReference>
<dbReference type="SUPFAM" id="SSF57756">
    <property type="entry name" value="Retrovirus zinc finger-like domains"/>
    <property type="match status" value="1"/>
</dbReference>
<dbReference type="PROSITE" id="PS50158">
    <property type="entry name" value="ZF_CCHC"/>
    <property type="match status" value="1"/>
</dbReference>
<gene>
    <name type="primary">gag</name>
</gene>
<protein>
    <recommendedName>
        <fullName>Gag polyprotein</fullName>
    </recommendedName>
    <alternativeName>
        <fullName>Core polyprotein</fullName>
    </alternativeName>
    <component>
        <recommendedName>
            <fullName>Matrix protein p15</fullName>
        </recommendedName>
    </component>
    <component>
        <recommendedName>
            <fullName>RNA-binding phosphoprotein p12</fullName>
        </recommendedName>
        <alternativeName>
            <fullName>pp12</fullName>
        </alternativeName>
    </component>
    <component>
        <recommendedName>
            <fullName>Capsid protein p30</fullName>
        </recommendedName>
    </component>
    <component>
        <recommendedName>
            <fullName>Nucleocapsid protein p10-Gag</fullName>
            <shortName>NC-gag</shortName>
        </recommendedName>
    </component>
</protein>
<evidence type="ECO:0000250" key="1">
    <source>
        <dbReference type="UniProtKB" id="P03332"/>
    </source>
</evidence>
<evidence type="ECO:0000250" key="2">
    <source>
        <dbReference type="UniProtKB" id="P03336"/>
    </source>
</evidence>
<evidence type="ECO:0000250" key="3">
    <source>
        <dbReference type="UniProtKB" id="P26807"/>
    </source>
</evidence>
<evidence type="ECO:0000255" key="4"/>
<evidence type="ECO:0000255" key="5">
    <source>
        <dbReference type="PROSITE-ProRule" id="PRU00047"/>
    </source>
</evidence>
<evidence type="ECO:0000256" key="6">
    <source>
        <dbReference type="SAM" id="MobiDB-lite"/>
    </source>
</evidence>
<comment type="function">
    <molecule>Gag polyprotein</molecule>
    <text evidence="1">Plays a role in budding and is processed by the viral protease during virion maturation outside the cell. During budding, it recruits, in a PPXY-dependent or independent manner, Nedd4-like ubiquitin ligases that conjugate ubiquitin molecules to Gag, or to Gag binding host factors. Interaction with HECT ubiquitin ligases probably links the viral protein to the host ESCRT pathway and facilitates release.</text>
</comment>
<comment type="function">
    <molecule>Matrix protein p15</molecule>
    <text evidence="1">Targets Gag and gag-pol polyproteins to the plasma membrane via a multipartite membrane binding signal, that includes its myristoylated N-terminus. Also mediates nuclear localization of the pre-integration complex.</text>
</comment>
<comment type="function">
    <molecule>RNA-binding phosphoprotein p12</molecule>
    <text evidence="1">Constituent of the pre-integration complex (PIC) which tethers the latter to mitotic chromosomes.</text>
</comment>
<comment type="function">
    <molecule>Capsid protein p30</molecule>
    <text evidence="2">Forms the spherical core of the virion that encapsulates the genomic RNA-nucleocapsid complex.</text>
</comment>
<comment type="function">
    <molecule>Nucleocapsid protein p10-Gag</molecule>
    <text evidence="1">Involved in the packaging and encapsidation of two copies of the genome. Binds with high affinity to conserved UCUG elements within the packaging signal, located near the 5'-end of the genome. This binding is dependent on genome dimerization.</text>
</comment>
<comment type="subunit">
    <molecule>Capsid protein p30</molecule>
    <text evidence="1 2">Homohexamer; further associates as homomultimer (By similarity). The virus core is composed of a lattice formed from hexagonal rings, each containing six capsid monomers. Interacts with mouse UBE2I and mouse PIAS4.</text>
</comment>
<comment type="subunit">
    <molecule>Gag polyprotein</molecule>
    <text evidence="1">Interacts (via PPXY motif) with host NEDD4. Interacts (via PSAP motif) with host TSG101. Interacts (via LYPX(n)L motif) with host PDCD6IP.</text>
</comment>
<comment type="subcellular location">
    <molecule>Gag polyprotein</molecule>
    <subcellularLocation>
        <location evidence="1">Virion</location>
    </subcellularLocation>
    <subcellularLocation>
        <location evidence="1">Host cell membrane</location>
        <topology evidence="1">Lipid-anchor</topology>
    </subcellularLocation>
    <subcellularLocation>
        <location evidence="3">Host endosome</location>
        <location evidence="3">Host multivesicular body</location>
    </subcellularLocation>
</comment>
<comment type="subcellular location">
    <molecule>Matrix protein p15</molecule>
    <subcellularLocation>
        <location evidence="1">Virion</location>
    </subcellularLocation>
</comment>
<comment type="subcellular location">
    <molecule>Capsid protein p30</molecule>
    <subcellularLocation>
        <location evidence="1">Virion</location>
    </subcellularLocation>
</comment>
<comment type="subcellular location">
    <molecule>Nucleocapsid protein p10-Gag</molecule>
    <subcellularLocation>
        <location evidence="1">Virion</location>
    </subcellularLocation>
</comment>
<comment type="subcellular location">
    <molecule>RNA-binding phosphoprotein p12</molecule>
    <subcellularLocation>
        <location evidence="1">Host cytoplasm</location>
    </subcellularLocation>
    <text evidence="1">Localizes to the host cytoplasm early in infection and binds to the mitotic chromosomes later on.</text>
</comment>
<comment type="alternative products">
    <event type="alternative initiation"/>
    <isoform>
        <id>P26805-1</id>
        <name>Gag polyprotein</name>
        <sequence type="displayed"/>
    </isoform>
    <isoform>
        <id>P0DOH6-1</id>
        <name>Glyco-Gag protein</name>
        <sequence type="external"/>
    </isoform>
</comment>
<comment type="domain">
    <molecule>Gag polyprotein</molecule>
    <text evidence="1">Late-budding domains (L domains) are short sequence motifs essential for viral particle budding. They recruit proteins of the host ESCRT machinery (Endosomal Sorting Complex Required for Transport) or ESCRT-associated proteins. RNA-binding phosphoprotein p12 contains one L domain: a PPXY motif which interacts with the WW domain 3 of NEDD4 E3 ubiquitin ligase. PPXY motif is essential for virus egress. Matrix protein p15 contains one L domain: a PTAP/PSAP motif, which interacts with the UEV domain of TSG101. The junction between the matrix protein p15 and RNA-binding phosphoprotein p12 also contains one L domain: a LYPX(n)L motif which interacts with PDCD6IP. Both PSAP and LYPX(n)L domains might play little to no role in budding and possibly drive residual virus release.</text>
</comment>
<comment type="PTM">
    <molecule>Gag polyprotein</molecule>
    <text evidence="1">Ubiquitinated by ITCH. Gag can recruit the ubiquitin ligase Itch in an L domain-independent manner to facilitate virus release via a mechanism that involves Gag ubiquitination.</text>
</comment>
<comment type="PTM">
    <molecule>Gag polyprotein</molecule>
    <text evidence="1">Specific enzymatic cleavages by the viral protease yield mature proteins. The protease is released by autocatalytic cleavage. The polyprotein is cleaved during and after budding, this process is termed maturation.</text>
</comment>
<comment type="PTM">
    <molecule>Capsid protein p30</molecule>
    <text evidence="1">Sumoylated; required for virus replication.</text>
</comment>
<comment type="PTM">
    <text evidence="1">RNA-binding phosphoprotein p12 is phosphorylated on serine residues.</text>
</comment>
<name>GAG_MLVFP</name>
<sequence length="538" mass="61033">MGQTATTPLSLTLDHWKDVERTAHNQSVEVRKRRWVTFCSAEWPTFNVGWPRDGTFNPDIITQVKIKVFSPGPHGHPDQVPYIVTWEALAVDPPPWVKPFVHPKPPLLLPPSAPSLPPEPPLSTPPQSSLYPALTSPLNTKPRPQVLPDSGGPLIDLLTEDPPPYRDPGPPSPDGKGDSGEVAPTEGAPDSSPMVSRLRGRREPPVADSTTSQAFPLRLGGNGQFQYWPFSSSDLYNWKNNNPSFSEDPGKLTALIESVLLTHQPTWDDCQQLLGTLLTGEEKQRVLLEARKAVRGEDGRPTQLPNDINDAFPLERPDWDYNTQRGRNHLVHYRQLLLAGLQNAGRSPTNLAKVKGITQGPNESPSAFLERLKEAYRRYTPYDPEDPGQETNVSMSFIWQSAPDIGRKLERLEDLKNKTLGDLVREAEKIFNKRETPEEREERVRRETEEKEERRRAEDERREKERDRRRHREMSKLLATVVSGQRQDRQGGERRRPQLDHDQCAYCKEKGHWARDCPKKPRGPRGPRPQASLLTLDD</sequence>